<comment type="function">
    <text evidence="1">Promotes RNA polymerase assembly. Latches the N- and C-terminal regions of the beta' subunit thereby facilitating its interaction with the beta and alpha subunits.</text>
</comment>
<comment type="catalytic activity">
    <reaction evidence="1">
        <text>RNA(n) + a ribonucleoside 5'-triphosphate = RNA(n+1) + diphosphate</text>
        <dbReference type="Rhea" id="RHEA:21248"/>
        <dbReference type="Rhea" id="RHEA-COMP:14527"/>
        <dbReference type="Rhea" id="RHEA-COMP:17342"/>
        <dbReference type="ChEBI" id="CHEBI:33019"/>
        <dbReference type="ChEBI" id="CHEBI:61557"/>
        <dbReference type="ChEBI" id="CHEBI:140395"/>
        <dbReference type="EC" id="2.7.7.6"/>
    </reaction>
</comment>
<comment type="subunit">
    <text evidence="1">The RNAP catalytic core consists of 2 alpha, 1 beta, 1 beta' and 1 omega subunit. When a sigma factor is associated with the core the holoenzyme is formed, which can initiate transcription.</text>
</comment>
<comment type="similarity">
    <text evidence="1">Belongs to the RNA polymerase subunit omega family.</text>
</comment>
<proteinExistence type="inferred from homology"/>
<dbReference type="EC" id="2.7.7.6" evidence="1"/>
<dbReference type="EMBL" id="CP000713">
    <property type="protein sequence ID" value="ABQ93531.1"/>
    <property type="molecule type" value="Genomic_DNA"/>
</dbReference>
<dbReference type="SMR" id="A5WCZ0"/>
<dbReference type="STRING" id="349106.PsycPRwf_0576"/>
<dbReference type="KEGG" id="prw:PsycPRwf_0576"/>
<dbReference type="eggNOG" id="COG1758">
    <property type="taxonomic scope" value="Bacteria"/>
</dbReference>
<dbReference type="HOGENOM" id="CLU_125406_5_3_6"/>
<dbReference type="GO" id="GO:0000428">
    <property type="term" value="C:DNA-directed RNA polymerase complex"/>
    <property type="evidence" value="ECO:0007669"/>
    <property type="project" value="UniProtKB-KW"/>
</dbReference>
<dbReference type="GO" id="GO:0003677">
    <property type="term" value="F:DNA binding"/>
    <property type="evidence" value="ECO:0007669"/>
    <property type="project" value="UniProtKB-UniRule"/>
</dbReference>
<dbReference type="GO" id="GO:0003899">
    <property type="term" value="F:DNA-directed RNA polymerase activity"/>
    <property type="evidence" value="ECO:0007669"/>
    <property type="project" value="UniProtKB-UniRule"/>
</dbReference>
<dbReference type="GO" id="GO:0006351">
    <property type="term" value="P:DNA-templated transcription"/>
    <property type="evidence" value="ECO:0007669"/>
    <property type="project" value="UniProtKB-UniRule"/>
</dbReference>
<dbReference type="Gene3D" id="3.90.940.10">
    <property type="match status" value="1"/>
</dbReference>
<dbReference type="HAMAP" id="MF_00366">
    <property type="entry name" value="RNApol_bact_RpoZ"/>
    <property type="match status" value="1"/>
</dbReference>
<dbReference type="InterPro" id="IPR003716">
    <property type="entry name" value="DNA-dir_RNA_pol_omega"/>
</dbReference>
<dbReference type="InterPro" id="IPR006110">
    <property type="entry name" value="Pol_omega/Rpo6/RPB6"/>
</dbReference>
<dbReference type="InterPro" id="IPR036161">
    <property type="entry name" value="RPB6/omega-like_sf"/>
</dbReference>
<dbReference type="NCBIfam" id="TIGR00690">
    <property type="entry name" value="rpoZ"/>
    <property type="match status" value="1"/>
</dbReference>
<dbReference type="PANTHER" id="PTHR34476">
    <property type="entry name" value="DNA-DIRECTED RNA POLYMERASE SUBUNIT OMEGA"/>
    <property type="match status" value="1"/>
</dbReference>
<dbReference type="PANTHER" id="PTHR34476:SF1">
    <property type="entry name" value="DNA-DIRECTED RNA POLYMERASE SUBUNIT OMEGA"/>
    <property type="match status" value="1"/>
</dbReference>
<dbReference type="Pfam" id="PF01192">
    <property type="entry name" value="RNA_pol_Rpb6"/>
    <property type="match status" value="1"/>
</dbReference>
<dbReference type="SMART" id="SM01409">
    <property type="entry name" value="RNA_pol_Rpb6"/>
    <property type="match status" value="1"/>
</dbReference>
<dbReference type="SUPFAM" id="SSF63562">
    <property type="entry name" value="RPB6/omega subunit-like"/>
    <property type="match status" value="1"/>
</dbReference>
<protein>
    <recommendedName>
        <fullName evidence="1">DNA-directed RNA polymerase subunit omega</fullName>
        <shortName evidence="1">RNAP omega subunit</shortName>
        <ecNumber evidence="1">2.7.7.6</ecNumber>
    </recommendedName>
    <alternativeName>
        <fullName evidence="1">RNA polymerase omega subunit</fullName>
    </alternativeName>
    <alternativeName>
        <fullName evidence="1">Transcriptase subunit omega</fullName>
    </alternativeName>
</protein>
<feature type="chain" id="PRO_1000072107" description="DNA-directed RNA polymerase subunit omega">
    <location>
        <begin position="1"/>
        <end position="86"/>
    </location>
</feature>
<sequence>MARVTVEDCLHAVDNRFELVLVASKRAHQLAKGVSEPLVEVNNDKPTVLALREIAAGLVTKDILNQPDHHFATNSLDLALSGGQGF</sequence>
<keyword id="KW-0240">DNA-directed RNA polymerase</keyword>
<keyword id="KW-0548">Nucleotidyltransferase</keyword>
<keyword id="KW-0804">Transcription</keyword>
<keyword id="KW-0808">Transferase</keyword>
<reference key="1">
    <citation type="submission" date="2007-05" db="EMBL/GenBank/DDBJ databases">
        <title>Complete sequence of chromosome of Psychrobacter sp. PRwf-1.</title>
        <authorList>
            <consortium name="US DOE Joint Genome Institute"/>
            <person name="Copeland A."/>
            <person name="Lucas S."/>
            <person name="Lapidus A."/>
            <person name="Barry K."/>
            <person name="Detter J.C."/>
            <person name="Glavina del Rio T."/>
            <person name="Hammon N."/>
            <person name="Israni S."/>
            <person name="Dalin E."/>
            <person name="Tice H."/>
            <person name="Pitluck S."/>
            <person name="Chain P."/>
            <person name="Malfatti S."/>
            <person name="Shin M."/>
            <person name="Vergez L."/>
            <person name="Schmutz J."/>
            <person name="Larimer F."/>
            <person name="Land M."/>
            <person name="Hauser L."/>
            <person name="Kyrpides N."/>
            <person name="Kim E."/>
            <person name="Tiedje J."/>
            <person name="Richardson P."/>
        </authorList>
    </citation>
    <scope>NUCLEOTIDE SEQUENCE [LARGE SCALE GENOMIC DNA]</scope>
    <source>
        <strain>PRwf-1</strain>
    </source>
</reference>
<name>RPOZ_PSYWF</name>
<organism>
    <name type="scientific">Psychrobacter sp. (strain PRwf-1)</name>
    <dbReference type="NCBI Taxonomy" id="349106"/>
    <lineage>
        <taxon>Bacteria</taxon>
        <taxon>Pseudomonadati</taxon>
        <taxon>Pseudomonadota</taxon>
        <taxon>Gammaproteobacteria</taxon>
        <taxon>Moraxellales</taxon>
        <taxon>Moraxellaceae</taxon>
        <taxon>Psychrobacter</taxon>
    </lineage>
</organism>
<evidence type="ECO:0000255" key="1">
    <source>
        <dbReference type="HAMAP-Rule" id="MF_00366"/>
    </source>
</evidence>
<accession>A5WCZ0</accession>
<gene>
    <name evidence="1" type="primary">rpoZ</name>
    <name type="ordered locus">PsycPRwf_0576</name>
</gene>